<gene>
    <name type="primary">DHBK</name>
</gene>
<proteinExistence type="evidence at transcript level"/>
<reference key="1">
    <citation type="submission" date="1998-02" db="EMBL/GenBank/DDBJ databases">
        <title>L. esculentum mRNA for 3,4-dihydroxy-2-butanone kinase.</title>
        <authorList>
            <person name="Herz S."/>
            <person name="Eberhardt S."/>
            <person name="Bacher A."/>
        </authorList>
    </citation>
    <scope>NUCLEOTIDE SEQUENCE [MRNA]</scope>
    <source>
        <strain>cv. Essex</strain>
        <tissue>Root</tissue>
    </source>
</reference>
<sequence length="82" mass="8177">SDAAETVGEIGSSIGRSMGGTSGIIYTIFFKAAHSVLKASSHSGVTSKQWAEALAASIAAVSKYGGASAGYRTLLDALIPAS</sequence>
<name>DHBK_SOYBN</name>
<accession>O49227</accession>
<keyword id="KW-0418">Kinase</keyword>
<keyword id="KW-1185">Reference proteome</keyword>
<keyword id="KW-0808">Transferase</keyword>
<comment type="similarity">
    <text evidence="2">Belongs to the dihydroxyacetone kinase (DAK) family.</text>
</comment>
<evidence type="ECO:0000255" key="1">
    <source>
        <dbReference type="PROSITE-ProRule" id="PRU00813"/>
    </source>
</evidence>
<evidence type="ECO:0000305" key="2"/>
<feature type="chain" id="PRO_0000121532" description="Putative 3,4-dihydroxy-2-butanone kinase">
    <location>
        <begin position="1" status="less than"/>
        <end position="82" status="greater than"/>
    </location>
</feature>
<feature type="domain" description="DhaL" evidence="1">
    <location>
        <begin position="1"/>
        <end position="82"/>
    </location>
</feature>
<feature type="non-terminal residue">
    <location>
        <position position="1"/>
    </location>
</feature>
<feature type="non-terminal residue">
    <location>
        <position position="82"/>
    </location>
</feature>
<organism>
    <name type="scientific">Glycine max</name>
    <name type="common">Soybean</name>
    <name type="synonym">Glycine hispida</name>
    <dbReference type="NCBI Taxonomy" id="3847"/>
    <lineage>
        <taxon>Eukaryota</taxon>
        <taxon>Viridiplantae</taxon>
        <taxon>Streptophyta</taxon>
        <taxon>Embryophyta</taxon>
        <taxon>Tracheophyta</taxon>
        <taxon>Spermatophyta</taxon>
        <taxon>Magnoliopsida</taxon>
        <taxon>eudicotyledons</taxon>
        <taxon>Gunneridae</taxon>
        <taxon>Pentapetalae</taxon>
        <taxon>rosids</taxon>
        <taxon>fabids</taxon>
        <taxon>Fabales</taxon>
        <taxon>Fabaceae</taxon>
        <taxon>Papilionoideae</taxon>
        <taxon>50 kb inversion clade</taxon>
        <taxon>NPAAA clade</taxon>
        <taxon>indigoferoid/millettioid clade</taxon>
        <taxon>Phaseoleae</taxon>
        <taxon>Glycine</taxon>
        <taxon>Glycine subgen. Soja</taxon>
    </lineage>
</organism>
<dbReference type="EC" id="2.7.1.-"/>
<dbReference type="EMBL" id="AF047054">
    <property type="protein sequence ID" value="AAC03560.1"/>
    <property type="molecule type" value="mRNA"/>
</dbReference>
<dbReference type="PIR" id="T06236">
    <property type="entry name" value="T06236"/>
</dbReference>
<dbReference type="SMR" id="O49227"/>
<dbReference type="STRING" id="3847.O49227"/>
<dbReference type="PaxDb" id="3847-GLYMA07G12130.1"/>
<dbReference type="eggNOG" id="KOG2426">
    <property type="taxonomic scope" value="Eukaryota"/>
</dbReference>
<dbReference type="InParanoid" id="O49227"/>
<dbReference type="Proteomes" id="UP000008827">
    <property type="component" value="Unplaced"/>
</dbReference>
<dbReference type="GO" id="GO:0004371">
    <property type="term" value="F:glycerone kinase activity"/>
    <property type="evidence" value="ECO:0007669"/>
    <property type="project" value="InterPro"/>
</dbReference>
<dbReference type="GO" id="GO:0006071">
    <property type="term" value="P:glycerol metabolic process"/>
    <property type="evidence" value="ECO:0007669"/>
    <property type="project" value="InterPro"/>
</dbReference>
<dbReference type="Gene3D" id="1.25.40.340">
    <property type="match status" value="1"/>
</dbReference>
<dbReference type="InterPro" id="IPR004007">
    <property type="entry name" value="DhaL_dom"/>
</dbReference>
<dbReference type="InterPro" id="IPR036117">
    <property type="entry name" value="DhaL_dom_sf"/>
</dbReference>
<dbReference type="InterPro" id="IPR050861">
    <property type="entry name" value="Dihydroxyacetone_Kinase"/>
</dbReference>
<dbReference type="PANTHER" id="PTHR28629">
    <property type="entry name" value="TRIOKINASE/FMN CYCLASE"/>
    <property type="match status" value="1"/>
</dbReference>
<dbReference type="PANTHER" id="PTHR28629:SF4">
    <property type="entry name" value="TRIOKINASE_FMN CYCLASE"/>
    <property type="match status" value="1"/>
</dbReference>
<dbReference type="Pfam" id="PF02734">
    <property type="entry name" value="Dak2"/>
    <property type="match status" value="1"/>
</dbReference>
<dbReference type="SUPFAM" id="SSF101473">
    <property type="entry name" value="DhaL-like"/>
    <property type="match status" value="1"/>
</dbReference>
<dbReference type="PROSITE" id="PS51480">
    <property type="entry name" value="DHAL"/>
    <property type="match status" value="1"/>
</dbReference>
<protein>
    <recommendedName>
        <fullName>Putative 3,4-dihydroxy-2-butanone kinase</fullName>
        <ecNumber>2.7.1.-</ecNumber>
    </recommendedName>
</protein>